<evidence type="ECO:0000255" key="1">
    <source>
        <dbReference type="PROSITE-ProRule" id="PRU00085"/>
    </source>
</evidence>
<evidence type="ECO:0000305" key="2"/>
<accession>P0A9A3</accession>
<accession>P52091</accession>
<accession>P76306</accession>
<accession>P94744</accession>
<proteinExistence type="inferred from homology"/>
<dbReference type="EMBL" id="AE014075">
    <property type="protein sequence ID" value="AAN80774.1"/>
    <property type="molecule type" value="Genomic_DNA"/>
</dbReference>
<dbReference type="RefSeq" id="WP_000179469.1">
    <property type="nucleotide sequence ID" value="NZ_CP051263.1"/>
</dbReference>
<dbReference type="SMR" id="P0A9A3"/>
<dbReference type="STRING" id="199310.c2315"/>
<dbReference type="KEGG" id="ecc:c2315"/>
<dbReference type="eggNOG" id="COG1528">
    <property type="taxonomic scope" value="Bacteria"/>
</dbReference>
<dbReference type="HOGENOM" id="CLU_065681_1_3_6"/>
<dbReference type="BioCyc" id="ECOL199310:C2315-MONOMER"/>
<dbReference type="Proteomes" id="UP000001410">
    <property type="component" value="Chromosome"/>
</dbReference>
<dbReference type="GO" id="GO:0005737">
    <property type="term" value="C:cytoplasm"/>
    <property type="evidence" value="ECO:0007669"/>
    <property type="project" value="UniProtKB-SubCell"/>
</dbReference>
<dbReference type="GO" id="GO:0008199">
    <property type="term" value="F:ferric iron binding"/>
    <property type="evidence" value="ECO:0007669"/>
    <property type="project" value="InterPro"/>
</dbReference>
<dbReference type="CDD" id="cd01055">
    <property type="entry name" value="Nonheme_Ferritin"/>
    <property type="match status" value="1"/>
</dbReference>
<dbReference type="FunFam" id="1.20.1260.10:FF:000004">
    <property type="entry name" value="Ferritin"/>
    <property type="match status" value="1"/>
</dbReference>
<dbReference type="Gene3D" id="1.20.1260.10">
    <property type="match status" value="1"/>
</dbReference>
<dbReference type="InterPro" id="IPR012347">
    <property type="entry name" value="Ferritin-like"/>
</dbReference>
<dbReference type="InterPro" id="IPR009040">
    <property type="entry name" value="Ferritin-like_diiron"/>
</dbReference>
<dbReference type="InterPro" id="IPR009078">
    <property type="entry name" value="Ferritin-like_SF"/>
</dbReference>
<dbReference type="InterPro" id="IPR008331">
    <property type="entry name" value="Ferritin_DPS_dom"/>
</dbReference>
<dbReference type="InterPro" id="IPR041719">
    <property type="entry name" value="Ferritin_prok"/>
</dbReference>
<dbReference type="NCBIfam" id="NF011597">
    <property type="entry name" value="PRK15022.1"/>
    <property type="match status" value="1"/>
</dbReference>
<dbReference type="Pfam" id="PF00210">
    <property type="entry name" value="Ferritin"/>
    <property type="match status" value="1"/>
</dbReference>
<dbReference type="SUPFAM" id="SSF47240">
    <property type="entry name" value="Ferritin-like"/>
    <property type="match status" value="1"/>
</dbReference>
<dbReference type="PROSITE" id="PS50905">
    <property type="entry name" value="FERRITIN_LIKE"/>
    <property type="match status" value="1"/>
</dbReference>
<reference key="1">
    <citation type="journal article" date="2002" name="Proc. Natl. Acad. Sci. U.S.A.">
        <title>Extensive mosaic structure revealed by the complete genome sequence of uropathogenic Escherichia coli.</title>
        <authorList>
            <person name="Welch R.A."/>
            <person name="Burland V."/>
            <person name="Plunkett G. III"/>
            <person name="Redford P."/>
            <person name="Roesch P."/>
            <person name="Rasko D."/>
            <person name="Buckles E.L."/>
            <person name="Liou S.-R."/>
            <person name="Boutin A."/>
            <person name="Hackett J."/>
            <person name="Stroud D."/>
            <person name="Mayhew G.F."/>
            <person name="Rose D.J."/>
            <person name="Zhou S."/>
            <person name="Schwartz D.C."/>
            <person name="Perna N.T."/>
            <person name="Mobley H.L.T."/>
            <person name="Donnenberg M.S."/>
            <person name="Blattner F.R."/>
        </authorList>
    </citation>
    <scope>NUCLEOTIDE SEQUENCE [LARGE SCALE GENOMIC DNA]</scope>
    <source>
        <strain>CFT073 / ATCC 700928 / UPEC</strain>
    </source>
</reference>
<name>FTNB_ECOL6</name>
<keyword id="KW-0963">Cytoplasm</keyword>
<keyword id="KW-1185">Reference proteome</keyword>
<gene>
    <name type="primary">ftnB</name>
    <name type="ordered locus">c2315</name>
</gene>
<protein>
    <recommendedName>
        <fullName>Bacterial non-heme ferritin-like protein</fullName>
    </recommendedName>
</protein>
<comment type="subcellular location">
    <subcellularLocation>
        <location evidence="2">Cytoplasm</location>
    </subcellularLocation>
</comment>
<comment type="similarity">
    <text evidence="2">Belongs to the ferritin family. Prokaryotic subfamily.</text>
</comment>
<sequence>MATAGMLLKLNSQMNREFYASNLYLHLSNWCSEQSLNGTATFLRAQAQSNVTQMMRMFNFMKSVGATPIVKAIDVPGEKLNSLEELFQKTMEEYEQRSSTLAQLADEAKELNDDSTVNFLRDLEKEQQHDGLLLQTILDEVRSAKLAGMCPVQTDQHVLNVVSHQLH</sequence>
<feature type="chain" id="PRO_0000201091" description="Bacterial non-heme ferritin-like protein">
    <location>
        <begin position="1"/>
        <end position="167"/>
    </location>
</feature>
<feature type="domain" description="Ferritin-like diiron" evidence="1">
    <location>
        <begin position="1"/>
        <end position="145"/>
    </location>
</feature>
<organism>
    <name type="scientific">Escherichia coli O6:H1 (strain CFT073 / ATCC 700928 / UPEC)</name>
    <dbReference type="NCBI Taxonomy" id="199310"/>
    <lineage>
        <taxon>Bacteria</taxon>
        <taxon>Pseudomonadati</taxon>
        <taxon>Pseudomonadota</taxon>
        <taxon>Gammaproteobacteria</taxon>
        <taxon>Enterobacterales</taxon>
        <taxon>Enterobacteriaceae</taxon>
        <taxon>Escherichia</taxon>
    </lineage>
</organism>